<comment type="function">
    <text evidence="1">Core subunit of the mitochondrial membrane respiratory chain NADH dehydrogenase (Complex I) that is believed to belong to the minimal assembly required for catalysis. Complex I functions in the transfer of electrons from NADH to the respiratory chain. The immediate electron acceptor for the enzyme is believed to be ubiquinone (By similarity).</text>
</comment>
<comment type="catalytic activity">
    <reaction>
        <text>a ubiquinone + NADH + 5 H(+)(in) = a ubiquinol + NAD(+) + 4 H(+)(out)</text>
        <dbReference type="Rhea" id="RHEA:29091"/>
        <dbReference type="Rhea" id="RHEA-COMP:9565"/>
        <dbReference type="Rhea" id="RHEA-COMP:9566"/>
        <dbReference type="ChEBI" id="CHEBI:15378"/>
        <dbReference type="ChEBI" id="CHEBI:16389"/>
        <dbReference type="ChEBI" id="CHEBI:17976"/>
        <dbReference type="ChEBI" id="CHEBI:57540"/>
        <dbReference type="ChEBI" id="CHEBI:57945"/>
        <dbReference type="EC" id="7.1.1.2"/>
    </reaction>
</comment>
<comment type="subcellular location">
    <subcellularLocation>
        <location evidence="3">Mitochondrion membrane</location>
        <topology evidence="3">Multi-pass membrane protein</topology>
    </subcellularLocation>
</comment>
<comment type="similarity">
    <text evidence="3">Belongs to the complex I subunit 6 family.</text>
</comment>
<evidence type="ECO:0000250" key="1"/>
<evidence type="ECO:0000255" key="2"/>
<evidence type="ECO:0000305" key="3"/>
<sequence>MTYFVLFLGLCFVLGSLAVASNPSPYYGVVGLVLASIAGCGWLLSLGVSFVSLVLFMVYLGGMLVVFVYSVSLAADPFPEAWGDWGVVGYGVGFVAVLMVGLIVGGFVGSLDFGVATVDSVGMFSVRLNFSGVAMFYSCGVGMFLVAGWGLLLTLFVVLELVRGLSRGAIRAV</sequence>
<organism>
    <name type="scientific">Aethia cristatella</name>
    <name type="common">Crested auklet</name>
    <dbReference type="NCBI Taxonomy" id="28685"/>
    <lineage>
        <taxon>Eukaryota</taxon>
        <taxon>Metazoa</taxon>
        <taxon>Chordata</taxon>
        <taxon>Craniata</taxon>
        <taxon>Vertebrata</taxon>
        <taxon>Euteleostomi</taxon>
        <taxon>Archelosauria</taxon>
        <taxon>Archosauria</taxon>
        <taxon>Dinosauria</taxon>
        <taxon>Saurischia</taxon>
        <taxon>Theropoda</taxon>
        <taxon>Coelurosauria</taxon>
        <taxon>Aves</taxon>
        <taxon>Neognathae</taxon>
        <taxon>Neoaves</taxon>
        <taxon>Charadriiformes</taxon>
        <taxon>Alcidae</taxon>
        <taxon>Aethia</taxon>
    </lineage>
</organism>
<protein>
    <recommendedName>
        <fullName>NADH-ubiquinone oxidoreductase chain 6</fullName>
        <ecNumber>7.1.1.2</ecNumber>
    </recommendedName>
    <alternativeName>
        <fullName>NADH dehydrogenase subunit 6</fullName>
    </alternativeName>
</protein>
<proteinExistence type="inferred from homology"/>
<name>NU6M_AETCR</name>
<accession>P43189</accession>
<reference key="1">
    <citation type="journal article" date="1994" name="Curr. Genet.">
        <title>Intragenic rearrangements in the mitochondrial NADH dehydrogenase subunit 6 gene of vertebrates.</title>
        <authorList>
            <person name="Moum T."/>
            <person name="Willassen N.P."/>
            <person name="Johansen S."/>
        </authorList>
    </citation>
    <scope>NUCLEOTIDE SEQUENCE [GENOMIC DNA]</scope>
</reference>
<gene>
    <name type="primary">MT-ND6</name>
    <name type="synonym">MTND6</name>
    <name type="synonym">NADH6</name>
    <name type="synonym">ND6</name>
</gene>
<dbReference type="EC" id="7.1.1.2"/>
<dbReference type="EMBL" id="X73928">
    <property type="protein sequence ID" value="CAA52133.1"/>
    <property type="molecule type" value="Genomic_DNA"/>
</dbReference>
<dbReference type="PIR" id="S44409">
    <property type="entry name" value="S44409"/>
</dbReference>
<dbReference type="SMR" id="P43189"/>
<dbReference type="GO" id="GO:0031966">
    <property type="term" value="C:mitochondrial membrane"/>
    <property type="evidence" value="ECO:0007669"/>
    <property type="project" value="UniProtKB-SubCell"/>
</dbReference>
<dbReference type="GO" id="GO:0008137">
    <property type="term" value="F:NADH dehydrogenase (ubiquinone) activity"/>
    <property type="evidence" value="ECO:0007669"/>
    <property type="project" value="UniProtKB-EC"/>
</dbReference>
<dbReference type="Gene3D" id="1.20.120.1200">
    <property type="entry name" value="NADH-ubiquinone/plastoquinone oxidoreductase chain 6, subunit NuoJ"/>
    <property type="match status" value="1"/>
</dbReference>
<dbReference type="InterPro" id="IPR050269">
    <property type="entry name" value="ComplexI_Subunit6"/>
</dbReference>
<dbReference type="InterPro" id="IPR001457">
    <property type="entry name" value="NADH_UbQ/plastoQ_OxRdtase_su6"/>
</dbReference>
<dbReference type="InterPro" id="IPR042106">
    <property type="entry name" value="Nuo/plastoQ_OxRdtase_6_NuoJ"/>
</dbReference>
<dbReference type="PANTHER" id="PTHR11435">
    <property type="entry name" value="NADH UBIQUINONE OXIDOREDUCTASE SUBUNIT ND6"/>
    <property type="match status" value="1"/>
</dbReference>
<dbReference type="PANTHER" id="PTHR11435:SF1">
    <property type="entry name" value="NADH-UBIQUINONE OXIDOREDUCTASE CHAIN 6"/>
    <property type="match status" value="1"/>
</dbReference>
<dbReference type="Pfam" id="PF00499">
    <property type="entry name" value="Oxidored_q3"/>
    <property type="match status" value="1"/>
</dbReference>
<keyword id="KW-0249">Electron transport</keyword>
<keyword id="KW-0472">Membrane</keyword>
<keyword id="KW-0496">Mitochondrion</keyword>
<keyword id="KW-0520">NAD</keyword>
<keyword id="KW-0679">Respiratory chain</keyword>
<keyword id="KW-1278">Translocase</keyword>
<keyword id="KW-0812">Transmembrane</keyword>
<keyword id="KW-1133">Transmembrane helix</keyword>
<keyword id="KW-0813">Transport</keyword>
<keyword id="KW-0830">Ubiquinone</keyword>
<feature type="chain" id="PRO_0000118230" description="NADH-ubiquinone oxidoreductase chain 6">
    <location>
        <begin position="1"/>
        <end position="173"/>
    </location>
</feature>
<feature type="transmembrane region" description="Helical" evidence="2">
    <location>
        <begin position="1"/>
        <end position="21"/>
    </location>
</feature>
<feature type="transmembrane region" description="Helical" evidence="2">
    <location>
        <begin position="27"/>
        <end position="47"/>
    </location>
</feature>
<feature type="transmembrane region" description="Helical" evidence="2">
    <location>
        <begin position="48"/>
        <end position="68"/>
    </location>
</feature>
<feature type="transmembrane region" description="Helical" evidence="2">
    <location>
        <begin position="87"/>
        <end position="107"/>
    </location>
</feature>
<feature type="transmembrane region" description="Helical" evidence="2">
    <location>
        <begin position="139"/>
        <end position="159"/>
    </location>
</feature>
<geneLocation type="mitochondrion"/>